<proteinExistence type="evidence at transcript level"/>
<reference key="1">
    <citation type="journal article" date="2013" name="PLoS Pathog.">
        <title>Deciphering the cryptic genome: genome-wide analyses of the rice pathogen Fusarium fujikuroi reveal complex regulation of secondary metabolism and novel metabolites.</title>
        <authorList>
            <person name="Wiemann P."/>
            <person name="Sieber C.M.K."/>
            <person name="von Bargen K.W."/>
            <person name="Studt L."/>
            <person name="Niehaus E.-M."/>
            <person name="Espino J.J."/>
            <person name="Huss K."/>
            <person name="Michielse C.B."/>
            <person name="Albermann S."/>
            <person name="Wagner D."/>
            <person name="Bergner S.V."/>
            <person name="Connolly L.R."/>
            <person name="Fischer A."/>
            <person name="Reuter G."/>
            <person name="Kleigrewe K."/>
            <person name="Bald T."/>
            <person name="Wingfield B.D."/>
            <person name="Ophir R."/>
            <person name="Freeman S."/>
            <person name="Hippler M."/>
            <person name="Smith K.M."/>
            <person name="Brown D.W."/>
            <person name="Proctor R.H."/>
            <person name="Muensterkoetter M."/>
            <person name="Freitag M."/>
            <person name="Humpf H.-U."/>
            <person name="Gueldener U."/>
            <person name="Tudzynski B."/>
        </authorList>
    </citation>
    <scope>NUCLEOTIDE SEQUENCE [LARGE SCALE GENOMIC DNA]</scope>
    <source>
        <strain>CBS 195.34 / IMI 58289 / NRRL A-6831</strain>
    </source>
</reference>
<reference key="2">
    <citation type="journal article" date="2017" name="Toxins">
        <title>Establishment of the inducible Tet-On system for the activation of the silent trichosetin gene cluster in Fusarium fujikuroi.</title>
        <authorList>
            <person name="Janevska S."/>
            <person name="Arndt B."/>
            <person name="Baumann L."/>
            <person name="Apken L.H."/>
            <person name="Mauriz Marques L.M."/>
            <person name="Humpf H.U."/>
            <person name="Tudzynski B."/>
        </authorList>
    </citation>
    <scope>FUNCTION</scope>
    <scope>INDUCTION</scope>
    <scope>DISRUPTION PHENOTYPE</scope>
</reference>
<dbReference type="EC" id="5.5.1.-" evidence="5"/>
<dbReference type="EMBL" id="HF679025">
    <property type="protein sequence ID" value="CCT65287.1"/>
    <property type="molecule type" value="Genomic_DNA"/>
</dbReference>
<dbReference type="SMR" id="S0DV66"/>
<dbReference type="STRING" id="1279085.S0DV66"/>
<dbReference type="EnsemblFungi" id="CCT65287">
    <property type="protein sequence ID" value="CCT65287"/>
    <property type="gene ID" value="FFUJ_02220"/>
</dbReference>
<dbReference type="VEuPathDB" id="FungiDB:FFUJ_02220"/>
<dbReference type="HOGENOM" id="CLU_041924_2_0_1"/>
<dbReference type="Proteomes" id="UP000016800">
    <property type="component" value="Chromosome 3"/>
</dbReference>
<dbReference type="GO" id="GO:0016853">
    <property type="term" value="F:isomerase activity"/>
    <property type="evidence" value="ECO:0007669"/>
    <property type="project" value="UniProtKB-KW"/>
</dbReference>
<dbReference type="InterPro" id="IPR054499">
    <property type="entry name" value="DA_C"/>
</dbReference>
<dbReference type="Pfam" id="PF22903">
    <property type="entry name" value="DA_C"/>
    <property type="match status" value="1"/>
</dbReference>
<dbReference type="Pfam" id="PF24137">
    <property type="entry name" value="DA_N"/>
    <property type="match status" value="1"/>
</dbReference>
<comment type="function">
    <text evidence="1 2">Hybrid PKS-NRPS synthetase; part of the gene cluster that mediates the biosynthesis of trichosetin, a trans-fused decalin-containing tetramic acid with antimicrobial activity (PubMed:28379186). The PKS module of PKS-NRPS1 together with the enoylreductase (ER) catalyze the formation of the polyketide unit which is then conjugated to L-serine by the condensation domain of the PKS-NRPS1 NRPS module (By similarity). Activity of the Dieckmann cyclase domain (RED) results in release of the Dieckmann product intermediate (By similarity). Diels-Alderase (DA) is involved in endo-selective Diels-Alder cycloaddition to form the decalin ring, leading to the production of N-desmethylequisetin also called trichosetin (By similarity). The cluster does not contain the equisetin N-methyltransferase and consequently, trichosetin is isolated as final product (PubMed:28379186).</text>
</comment>
<comment type="catalytic activity">
    <reaction evidence="1">
        <text>(5S)-3-[(2E,6R,8E,10E,12E)-2,6-dimethyltetradeca-2,8,10,12-tetraenoyl]-5-(hydroxymethyl)pyrrolidine-2,4-dione = trichosetin</text>
        <dbReference type="Rhea" id="RHEA:67328"/>
        <dbReference type="ChEBI" id="CHEBI:142061"/>
        <dbReference type="ChEBI" id="CHEBI:169938"/>
    </reaction>
    <physiologicalReaction direction="left-to-right" evidence="1">
        <dbReference type="Rhea" id="RHEA:67329"/>
    </physiologicalReaction>
</comment>
<comment type="pathway">
    <text evidence="5">Mycotoxin biosynthesis.</text>
</comment>
<comment type="induction">
    <text evidence="2">Expression is positively regulated by the trichosetin cluster-specific transcription activator TF22 (PubMed:28379186).</text>
</comment>
<comment type="disruption phenotype">
    <text evidence="2">Results in the production of reduced, though significant, amounts of trichosetin (PubMed:28379186).</text>
</comment>
<comment type="similarity">
    <text evidence="4">Belongs to the Diels-Alderase family.</text>
</comment>
<sequence length="373" mass="40673">MPAKTVSHLNFETSISTETVPASPYIPGSGNVFAKFVDAISQTGWELWYFDGVSKDDQSAISIGINRSARGLEHGGFTVQIFAIWPDGHTWHRDLYFPESTVTSEDGHITGLWEDAGSGGKVSFSVTRDCSLTMLTFAVPGVVDGTMHLETLPGDSGLETNPELGPRAHIVRPKGRASVKAELSLSSGDNSASERFVLGPSANGGMDRIWTLDTWPKVMTESYYLRAQVGPYAMQITRLFSEAESGCKPYTMARLYRDGKLICAANQVLTYEEQDFSKDSLILSKRYDASSEDVVTGAYRDKNIGYVVEFVAKGTDGQRWMFQVDHERIFWSYPTSAPGPEGTGNTGFIESVIGGADEEAYFGVGIGGQCQLS</sequence>
<name>EQX3_GIBF5</name>
<evidence type="ECO:0000250" key="1">
    <source>
        <dbReference type="UniProtKB" id="A0A0E4AZP0"/>
    </source>
</evidence>
<evidence type="ECO:0000269" key="2">
    <source>
    </source>
</evidence>
<evidence type="ECO:0000303" key="3">
    <source>
    </source>
</evidence>
<evidence type="ECO:0000305" key="4"/>
<evidence type="ECO:0000305" key="5">
    <source>
    </source>
</evidence>
<keyword id="KW-0413">Isomerase</keyword>
<keyword id="KW-1185">Reference proteome</keyword>
<gene>
    <name evidence="3" type="primary">DA</name>
    <name type="ORF">FFUJ_02220</name>
</gene>
<organism>
    <name type="scientific">Gibberella fujikuroi (strain CBS 195.34 / IMI 58289 / NRRL A-6831)</name>
    <name type="common">Bakanae and foot rot disease fungus</name>
    <name type="synonym">Fusarium fujikuroi</name>
    <dbReference type="NCBI Taxonomy" id="1279085"/>
    <lineage>
        <taxon>Eukaryota</taxon>
        <taxon>Fungi</taxon>
        <taxon>Dikarya</taxon>
        <taxon>Ascomycota</taxon>
        <taxon>Pezizomycotina</taxon>
        <taxon>Sordariomycetes</taxon>
        <taxon>Hypocreomycetidae</taxon>
        <taxon>Hypocreales</taxon>
        <taxon>Nectriaceae</taxon>
        <taxon>Fusarium</taxon>
        <taxon>Fusarium fujikuroi species complex</taxon>
    </lineage>
</organism>
<protein>
    <recommendedName>
        <fullName evidence="3">Diels-Alderase</fullName>
        <shortName evidence="3">DA</shortName>
        <ecNumber evidence="5">5.5.1.-</ecNumber>
    </recommendedName>
    <alternativeName>
        <fullName evidence="3">Trichosetin biosynthesis cluster protein DA</fullName>
    </alternativeName>
</protein>
<feature type="chain" id="PRO_0000443988" description="Diels-Alderase">
    <location>
        <begin position="1"/>
        <end position="373"/>
    </location>
</feature>
<accession>S0DV66</accession>